<organism>
    <name type="scientific">Escherichia coli O127:H6 (strain E2348/69 / EPEC)</name>
    <dbReference type="NCBI Taxonomy" id="574521"/>
    <lineage>
        <taxon>Bacteria</taxon>
        <taxon>Pseudomonadati</taxon>
        <taxon>Pseudomonadota</taxon>
        <taxon>Gammaproteobacteria</taxon>
        <taxon>Enterobacterales</taxon>
        <taxon>Enterobacteriaceae</taxon>
        <taxon>Escherichia</taxon>
    </lineage>
</organism>
<name>WECF_ECO27</name>
<sequence length="359" mass="40499">MTVLIHVLGSDIPHHNRTVLRFFNDALAATSGHAREFMVAGKDDGLSDSCPALSVQFFPGKKSLAEAVIAKAKANRQQRFFFHGQFNPKLWLALLSGGIKPSQFFWHIWGADLYELSSGLRYKLFYPLRRLAQKRVGCVFATRGDLSFFAKTHPKVRGELLYFPTRMDPSLNTMANDRQREGKMTILVGNSGDRSNEHIAALRAVHQQFGDTVKVVVPMGYPPNNEAYIEEVRQAGLELFSEENLQVLSEKLEFDAYLTLLRQCDLGYFIFARQQGIGTLCLLIQAGIPCVLNRENPFWQDMTEQHLPVLFTTDDLNEDIVREAQRQLASVDKNTIAFFSPNYLQGWQRALAIAAGEVA</sequence>
<keyword id="KW-0997">Cell inner membrane</keyword>
<keyword id="KW-1003">Cell membrane</keyword>
<keyword id="KW-0328">Glycosyltransferase</keyword>
<keyword id="KW-0472">Membrane</keyword>
<keyword id="KW-1185">Reference proteome</keyword>
<keyword id="KW-0808">Transferase</keyword>
<feature type="chain" id="PRO_1000148783" description="TDP-N-acetylfucosamine:lipid II N-acetylfucosaminyltransferase">
    <location>
        <begin position="1"/>
        <end position="359"/>
    </location>
</feature>
<reference key="1">
    <citation type="journal article" date="2009" name="J. Bacteriol.">
        <title>Complete genome sequence and comparative genome analysis of enteropathogenic Escherichia coli O127:H6 strain E2348/69.</title>
        <authorList>
            <person name="Iguchi A."/>
            <person name="Thomson N.R."/>
            <person name="Ogura Y."/>
            <person name="Saunders D."/>
            <person name="Ooka T."/>
            <person name="Henderson I.R."/>
            <person name="Harris D."/>
            <person name="Asadulghani M."/>
            <person name="Kurokawa K."/>
            <person name="Dean P."/>
            <person name="Kenny B."/>
            <person name="Quail M.A."/>
            <person name="Thurston S."/>
            <person name="Dougan G."/>
            <person name="Hayashi T."/>
            <person name="Parkhill J."/>
            <person name="Frankel G."/>
        </authorList>
    </citation>
    <scope>NUCLEOTIDE SEQUENCE [LARGE SCALE GENOMIC DNA]</scope>
    <source>
        <strain>E2348/69 / EPEC</strain>
    </source>
</reference>
<comment type="function">
    <text evidence="1">Catalyzes the synthesis of Und-PP-GlcNAc-ManNAcA-Fuc4NAc (Lipid III), the third lipid-linked intermediate involved in ECA synthesis.</text>
</comment>
<comment type="catalytic activity">
    <reaction evidence="1">
        <text>beta-D-ManNAcA-(1-&gt;4)-alpha-D-GlcNAc-di-trans,octa-cis-undecaprenyl diphosphate + dTDP-4-acetamido-4,6-dideoxy-alpha-D-galactose = alpha-D-FucNAc4-(1-&gt;4)-beta-D-ManNAcA-(1-&gt;4)-D-GlcNAc-undecaprenyl diphosphate + dTDP + H(+)</text>
        <dbReference type="Rhea" id="RHEA:28759"/>
        <dbReference type="ChEBI" id="CHEBI:15378"/>
        <dbReference type="ChEBI" id="CHEBI:58369"/>
        <dbReference type="ChEBI" id="CHEBI:61495"/>
        <dbReference type="ChEBI" id="CHEBI:61496"/>
        <dbReference type="ChEBI" id="CHEBI:68493"/>
        <dbReference type="EC" id="2.4.1.325"/>
    </reaction>
</comment>
<comment type="pathway">
    <text evidence="1">Bacterial outer membrane biogenesis; enterobacterial common antigen biosynthesis.</text>
</comment>
<comment type="subcellular location">
    <subcellularLocation>
        <location evidence="1">Cell inner membrane</location>
        <topology evidence="1">Peripheral membrane protein</topology>
    </subcellularLocation>
</comment>
<comment type="similarity">
    <text evidence="1">Belongs to the glycosyltransferase 56 family.</text>
</comment>
<proteinExistence type="inferred from homology"/>
<gene>
    <name evidence="1" type="primary">wecF</name>
    <name evidence="1" type="synonym">rffT</name>
    <name type="ordered locus">E2348C_4094</name>
</gene>
<dbReference type="EC" id="2.4.1.325" evidence="1"/>
<dbReference type="EMBL" id="FM180568">
    <property type="protein sequence ID" value="CAS11642.1"/>
    <property type="molecule type" value="Genomic_DNA"/>
</dbReference>
<dbReference type="RefSeq" id="WP_000217276.1">
    <property type="nucleotide sequence ID" value="NC_011601.1"/>
</dbReference>
<dbReference type="SMR" id="B7UNB1"/>
<dbReference type="CAZy" id="GT56">
    <property type="family name" value="Glycosyltransferase Family 56"/>
</dbReference>
<dbReference type="KEGG" id="ecg:E2348C_4094"/>
<dbReference type="HOGENOM" id="CLU_066584_0_0_6"/>
<dbReference type="UniPathway" id="UPA00566"/>
<dbReference type="Proteomes" id="UP000008205">
    <property type="component" value="Chromosome"/>
</dbReference>
<dbReference type="GO" id="GO:0005886">
    <property type="term" value="C:plasma membrane"/>
    <property type="evidence" value="ECO:0007669"/>
    <property type="project" value="UniProtKB-SubCell"/>
</dbReference>
<dbReference type="GO" id="GO:0102031">
    <property type="term" value="F:4-acetamido-4,6-dideoxy-D-galactose transferase activity"/>
    <property type="evidence" value="ECO:0007669"/>
    <property type="project" value="UniProtKB-EC"/>
</dbReference>
<dbReference type="GO" id="GO:0008417">
    <property type="term" value="F:fucosyltransferase activity"/>
    <property type="evidence" value="ECO:0007669"/>
    <property type="project" value="InterPro"/>
</dbReference>
<dbReference type="GO" id="GO:0009246">
    <property type="term" value="P:enterobacterial common antigen biosynthetic process"/>
    <property type="evidence" value="ECO:0007669"/>
    <property type="project" value="UniProtKB-UniRule"/>
</dbReference>
<dbReference type="GO" id="GO:0036065">
    <property type="term" value="P:fucosylation"/>
    <property type="evidence" value="ECO:0007669"/>
    <property type="project" value="InterPro"/>
</dbReference>
<dbReference type="HAMAP" id="MF_01002">
    <property type="entry name" value="WecF_RffT"/>
    <property type="match status" value="1"/>
</dbReference>
<dbReference type="InterPro" id="IPR009993">
    <property type="entry name" value="WecF"/>
</dbReference>
<dbReference type="NCBIfam" id="NF002752">
    <property type="entry name" value="PRK02797.1-1"/>
    <property type="match status" value="1"/>
</dbReference>
<dbReference type="NCBIfam" id="NF002753">
    <property type="entry name" value="PRK02797.1-2"/>
    <property type="match status" value="1"/>
</dbReference>
<dbReference type="NCBIfam" id="NF002754">
    <property type="entry name" value="PRK02797.1-3"/>
    <property type="match status" value="1"/>
</dbReference>
<dbReference type="Pfam" id="PF07429">
    <property type="entry name" value="Glyco_transf_56"/>
    <property type="match status" value="1"/>
</dbReference>
<evidence type="ECO:0000255" key="1">
    <source>
        <dbReference type="HAMAP-Rule" id="MF_01002"/>
    </source>
</evidence>
<accession>B7UNB1</accession>
<protein>
    <recommendedName>
        <fullName evidence="1">TDP-N-acetylfucosamine:lipid II N-acetylfucosaminyltransferase</fullName>
        <ecNumber evidence="1">2.4.1.325</ecNumber>
    </recommendedName>
    <alternativeName>
        <fullName evidence="1">4-alpha-L-fucosyltransferase</fullName>
    </alternativeName>
    <alternativeName>
        <fullName evidence="1">TDP-Fuc4NAc:lipid II Fuc4NAc transferase</fullName>
        <shortName evidence="1">Fuc4NAc transferase</shortName>
    </alternativeName>
</protein>